<proteinExistence type="evidence at transcript level"/>
<accession>P47926</accession>
<dbReference type="EMBL" id="L22188">
    <property type="protein sequence ID" value="AAA20129.1"/>
    <property type="molecule type" value="mRNA"/>
</dbReference>
<dbReference type="EMBL" id="L22189">
    <property type="protein sequence ID" value="AAA20130.1"/>
    <property type="molecule type" value="Unassigned_DNA"/>
</dbReference>
<dbReference type="PIR" id="S43910">
    <property type="entry name" value="S43910"/>
</dbReference>
<dbReference type="RefSeq" id="NP_001234666.1">
    <property type="nucleotide sequence ID" value="NM_001247737.2"/>
</dbReference>
<dbReference type="SMR" id="P47926"/>
<dbReference type="STRING" id="4081.P47926"/>
<dbReference type="PaxDb" id="4081-Solyc11g011210.1.1"/>
<dbReference type="EnsemblPlants" id="Solyc11g011210.2.1">
    <property type="protein sequence ID" value="Solyc11g011210.2.1"/>
    <property type="gene ID" value="Solyc11g011210.2"/>
</dbReference>
<dbReference type="GeneID" id="543963"/>
<dbReference type="Gramene" id="Solyc11g011210.2.1">
    <property type="protein sequence ID" value="Solyc11g011210.2.1"/>
    <property type="gene ID" value="Solyc11g011210.2"/>
</dbReference>
<dbReference type="KEGG" id="sly:543963"/>
<dbReference type="eggNOG" id="ENOG502S3SC">
    <property type="taxonomic scope" value="Eukaryota"/>
</dbReference>
<dbReference type="HOGENOM" id="CLU_142643_5_1_1"/>
<dbReference type="InParanoid" id="P47926"/>
<dbReference type="OMA" id="SDCKPRC"/>
<dbReference type="OrthoDB" id="1886938at2759"/>
<dbReference type="PhylomeDB" id="P47926"/>
<dbReference type="Proteomes" id="UP000004994">
    <property type="component" value="Chromosome 11"/>
</dbReference>
<dbReference type="GO" id="GO:0005576">
    <property type="term" value="C:extracellular region"/>
    <property type="evidence" value="ECO:0007669"/>
    <property type="project" value="UniProtKB-SubCell"/>
</dbReference>
<dbReference type="InterPro" id="IPR003854">
    <property type="entry name" value="GASA"/>
</dbReference>
<dbReference type="PANTHER" id="PTHR23201">
    <property type="entry name" value="EXTENSIN, PROLINE-RICH PROTEIN"/>
    <property type="match status" value="1"/>
</dbReference>
<dbReference type="PANTHER" id="PTHR23201:SF60">
    <property type="entry name" value="GIBBERELLIN-REGULATED PROTEIN 5"/>
    <property type="match status" value="1"/>
</dbReference>
<dbReference type="Pfam" id="PF02704">
    <property type="entry name" value="GASA"/>
    <property type="match status" value="1"/>
</dbReference>
<comment type="subcellular location">
    <subcellularLocation>
        <location evidence="2">Secreted</location>
    </subcellularLocation>
</comment>
<comment type="tissue specificity">
    <text>Expressed very early in lateral root development.</text>
</comment>
<comment type="induction">
    <text>By auxin.</text>
</comment>
<comment type="PTM">
    <text>Six disulfide bonds may be present.</text>
</comment>
<comment type="similarity">
    <text evidence="2">Belongs to the GASA family.</text>
</comment>
<reference key="1">
    <citation type="journal article" date="1994" name="Mol. Gen. Genet.">
        <title>A molecular marker for lateral root initiation: the RSI-1 gene of tomato (Lycopersicon esculentum Mill) is activated in early lateral root primordia.</title>
        <authorList>
            <person name="Taylor B.H."/>
            <person name="Scheuring C.F."/>
        </authorList>
    </citation>
    <scope>NUCLEOTIDE SEQUENCE [MRNA]</scope>
    <source>
        <strain>cv. VFNT Cherry</strain>
        <tissue>Root</tissue>
    </source>
</reference>
<organism>
    <name type="scientific">Solanum lycopersicum</name>
    <name type="common">Tomato</name>
    <name type="synonym">Lycopersicon esculentum</name>
    <dbReference type="NCBI Taxonomy" id="4081"/>
    <lineage>
        <taxon>Eukaryota</taxon>
        <taxon>Viridiplantae</taxon>
        <taxon>Streptophyta</taxon>
        <taxon>Embryophyta</taxon>
        <taxon>Tracheophyta</taxon>
        <taxon>Spermatophyta</taxon>
        <taxon>Magnoliopsida</taxon>
        <taxon>eudicotyledons</taxon>
        <taxon>Gunneridae</taxon>
        <taxon>Pentapetalae</taxon>
        <taxon>asterids</taxon>
        <taxon>lamiids</taxon>
        <taxon>Solanales</taxon>
        <taxon>Solanaceae</taxon>
        <taxon>Solanoideae</taxon>
        <taxon>Solaneae</taxon>
        <taxon>Solanum</taxon>
        <taxon>Solanum subgen. Lycopersicon</taxon>
    </lineage>
</organism>
<evidence type="ECO:0000255" key="1"/>
<evidence type="ECO:0000305" key="2"/>
<sequence>MAKSGYNASFLLLISMFLILLTFSNVVEGYNKLRPTDCKPRCTYRCSATSHKKPCMFFCQKCCATCLCVPKGVYGNKQSCPCYNNWKTQEGKPKCP</sequence>
<feature type="signal peptide" evidence="1">
    <location>
        <begin position="1"/>
        <end position="29"/>
    </location>
</feature>
<feature type="chain" id="PRO_0000022251" description="Protein RSI-1">
    <location>
        <begin position="30"/>
        <end position="96"/>
    </location>
</feature>
<protein>
    <recommendedName>
        <fullName>Protein RSI-1</fullName>
    </recommendedName>
    <alternativeName>
        <fullName>TR132</fullName>
    </alternativeName>
</protein>
<name>RSI1_SOLLC</name>
<gene>
    <name type="primary">RSI-1</name>
</gene>
<keyword id="KW-1015">Disulfide bond</keyword>
<keyword id="KW-1185">Reference proteome</keyword>
<keyword id="KW-0964">Secreted</keyword>
<keyword id="KW-0732">Signal</keyword>